<gene>
    <name evidence="1" type="primary">dcd</name>
    <name type="ordered locus">NIS_1646</name>
</gene>
<organism>
    <name type="scientific">Nitratiruptor sp. (strain SB155-2)</name>
    <dbReference type="NCBI Taxonomy" id="387092"/>
    <lineage>
        <taxon>Bacteria</taxon>
        <taxon>Pseudomonadati</taxon>
        <taxon>Campylobacterota</taxon>
        <taxon>Epsilonproteobacteria</taxon>
        <taxon>Nautiliales</taxon>
        <taxon>Nitratiruptoraceae</taxon>
        <taxon>Nitratiruptor</taxon>
    </lineage>
</organism>
<keyword id="KW-0378">Hydrolase</keyword>
<keyword id="KW-0546">Nucleotide metabolism</keyword>
<keyword id="KW-0547">Nucleotide-binding</keyword>
<keyword id="KW-1185">Reference proteome</keyword>
<accession>A6Q5J3</accession>
<name>DCD_NITSB</name>
<proteinExistence type="inferred from homology"/>
<dbReference type="EC" id="3.5.4.13" evidence="1"/>
<dbReference type="EMBL" id="AP009178">
    <property type="protein sequence ID" value="BAF70752.1"/>
    <property type="molecule type" value="Genomic_DNA"/>
</dbReference>
<dbReference type="RefSeq" id="WP_012083015.1">
    <property type="nucleotide sequence ID" value="NC_009662.1"/>
</dbReference>
<dbReference type="SMR" id="A6Q5J3"/>
<dbReference type="FunCoup" id="A6Q5J3">
    <property type="interactions" value="209"/>
</dbReference>
<dbReference type="STRING" id="387092.NIS_1646"/>
<dbReference type="KEGG" id="nis:NIS_1646"/>
<dbReference type="eggNOG" id="COG0717">
    <property type="taxonomic scope" value="Bacteria"/>
</dbReference>
<dbReference type="HOGENOM" id="CLU_087476_4_0_7"/>
<dbReference type="InParanoid" id="A6Q5J3"/>
<dbReference type="OrthoDB" id="9780956at2"/>
<dbReference type="UniPathway" id="UPA00610">
    <property type="reaction ID" value="UER00665"/>
</dbReference>
<dbReference type="Proteomes" id="UP000001118">
    <property type="component" value="Chromosome"/>
</dbReference>
<dbReference type="GO" id="GO:0008829">
    <property type="term" value="F:dCTP deaminase activity"/>
    <property type="evidence" value="ECO:0007669"/>
    <property type="project" value="UniProtKB-UniRule"/>
</dbReference>
<dbReference type="GO" id="GO:0000166">
    <property type="term" value="F:nucleotide binding"/>
    <property type="evidence" value="ECO:0007669"/>
    <property type="project" value="UniProtKB-KW"/>
</dbReference>
<dbReference type="GO" id="GO:0006226">
    <property type="term" value="P:dUMP biosynthetic process"/>
    <property type="evidence" value="ECO:0007669"/>
    <property type="project" value="UniProtKB-UniPathway"/>
</dbReference>
<dbReference type="GO" id="GO:0006229">
    <property type="term" value="P:dUTP biosynthetic process"/>
    <property type="evidence" value="ECO:0007669"/>
    <property type="project" value="UniProtKB-UniRule"/>
</dbReference>
<dbReference type="GO" id="GO:0015949">
    <property type="term" value="P:nucleobase-containing small molecule interconversion"/>
    <property type="evidence" value="ECO:0007669"/>
    <property type="project" value="TreeGrafter"/>
</dbReference>
<dbReference type="CDD" id="cd07557">
    <property type="entry name" value="trimeric_dUTPase"/>
    <property type="match status" value="1"/>
</dbReference>
<dbReference type="FunFam" id="2.70.40.10:FF:000001">
    <property type="entry name" value="dCTP deaminase"/>
    <property type="match status" value="1"/>
</dbReference>
<dbReference type="Gene3D" id="2.70.40.10">
    <property type="match status" value="1"/>
</dbReference>
<dbReference type="HAMAP" id="MF_00146">
    <property type="entry name" value="dCTP_deaminase"/>
    <property type="match status" value="1"/>
</dbReference>
<dbReference type="InterPro" id="IPR011962">
    <property type="entry name" value="dCTP_deaminase"/>
</dbReference>
<dbReference type="InterPro" id="IPR036157">
    <property type="entry name" value="dUTPase-like_sf"/>
</dbReference>
<dbReference type="InterPro" id="IPR033704">
    <property type="entry name" value="dUTPase_trimeric"/>
</dbReference>
<dbReference type="NCBIfam" id="TIGR02274">
    <property type="entry name" value="dCTP_deam"/>
    <property type="match status" value="1"/>
</dbReference>
<dbReference type="PANTHER" id="PTHR42680">
    <property type="entry name" value="DCTP DEAMINASE"/>
    <property type="match status" value="1"/>
</dbReference>
<dbReference type="PANTHER" id="PTHR42680:SF3">
    <property type="entry name" value="DCTP DEAMINASE"/>
    <property type="match status" value="1"/>
</dbReference>
<dbReference type="Pfam" id="PF22769">
    <property type="entry name" value="DCD"/>
    <property type="match status" value="1"/>
</dbReference>
<dbReference type="SUPFAM" id="SSF51283">
    <property type="entry name" value="dUTPase-like"/>
    <property type="match status" value="1"/>
</dbReference>
<feature type="chain" id="PRO_1000009773" description="dCTP deaminase">
    <location>
        <begin position="1"/>
        <end position="185"/>
    </location>
</feature>
<feature type="active site" description="Proton donor/acceptor" evidence="1">
    <location>
        <position position="133"/>
    </location>
</feature>
<feature type="binding site" evidence="1">
    <location>
        <begin position="107"/>
        <end position="112"/>
    </location>
    <ligand>
        <name>dCTP</name>
        <dbReference type="ChEBI" id="CHEBI:61481"/>
    </ligand>
</feature>
<feature type="binding site" evidence="1">
    <location>
        <position position="152"/>
    </location>
    <ligand>
        <name>dCTP</name>
        <dbReference type="ChEBI" id="CHEBI:61481"/>
    </ligand>
</feature>
<feature type="binding site" evidence="1">
    <location>
        <position position="166"/>
    </location>
    <ligand>
        <name>dCTP</name>
        <dbReference type="ChEBI" id="CHEBI:61481"/>
    </ligand>
</feature>
<feature type="binding site" evidence="1">
    <location>
        <position position="176"/>
    </location>
    <ligand>
        <name>dCTP</name>
        <dbReference type="ChEBI" id="CHEBI:61481"/>
    </ligand>
</feature>
<reference key="1">
    <citation type="journal article" date="2007" name="Proc. Natl. Acad. Sci. U.S.A.">
        <title>Deep-sea vent epsilon-proteobacterial genomes provide insights into emergence of pathogens.</title>
        <authorList>
            <person name="Nakagawa S."/>
            <person name="Takaki Y."/>
            <person name="Shimamura S."/>
            <person name="Reysenbach A.-L."/>
            <person name="Takai K."/>
            <person name="Horikoshi K."/>
        </authorList>
    </citation>
    <scope>NUCLEOTIDE SEQUENCE [LARGE SCALE GENOMIC DNA]</scope>
    <source>
        <strain>SB155-2</strain>
    </source>
</reference>
<evidence type="ECO:0000255" key="1">
    <source>
        <dbReference type="HAMAP-Rule" id="MF_00146"/>
    </source>
</evidence>
<sequence length="185" mass="20836">MGLKADCWIRQKAVEDGMIEPFCEDQIGKGVVSYGLSSYGYDIRVSDEFKIFTNVNAEVVDPKHFDERNVVDFKGDVCIVPPNSFALARTVEYFRIPRNVLAICVGKSTYARCGIIVNVTPFEPEFEGHITIEISNTTPLPAKIYANEGIAQVLFFEGDEDCEVSYKDKRGKYQHQRGITLPKIL</sequence>
<comment type="function">
    <text evidence="1">Catalyzes the deamination of dCTP to dUTP.</text>
</comment>
<comment type="catalytic activity">
    <reaction evidence="1">
        <text>dCTP + H2O + H(+) = dUTP + NH4(+)</text>
        <dbReference type="Rhea" id="RHEA:22680"/>
        <dbReference type="ChEBI" id="CHEBI:15377"/>
        <dbReference type="ChEBI" id="CHEBI:15378"/>
        <dbReference type="ChEBI" id="CHEBI:28938"/>
        <dbReference type="ChEBI" id="CHEBI:61481"/>
        <dbReference type="ChEBI" id="CHEBI:61555"/>
        <dbReference type="EC" id="3.5.4.13"/>
    </reaction>
</comment>
<comment type="pathway">
    <text evidence="1">Pyrimidine metabolism; dUMP biosynthesis; dUMP from dCTP (dUTP route): step 1/2.</text>
</comment>
<comment type="subunit">
    <text evidence="1">Homotrimer.</text>
</comment>
<comment type="similarity">
    <text evidence="1">Belongs to the dCTP deaminase family.</text>
</comment>
<protein>
    <recommendedName>
        <fullName evidence="1">dCTP deaminase</fullName>
        <ecNumber evidence="1">3.5.4.13</ecNumber>
    </recommendedName>
    <alternativeName>
        <fullName evidence="1">Deoxycytidine triphosphate deaminase</fullName>
    </alternativeName>
</protein>